<comment type="function">
    <text evidence="1">Catalyzes the transfer of a phosphate group to glutamate to form L-glutamate 5-phosphate.</text>
</comment>
<comment type="catalytic activity">
    <reaction evidence="1">
        <text>L-glutamate + ATP = L-glutamyl 5-phosphate + ADP</text>
        <dbReference type="Rhea" id="RHEA:14877"/>
        <dbReference type="ChEBI" id="CHEBI:29985"/>
        <dbReference type="ChEBI" id="CHEBI:30616"/>
        <dbReference type="ChEBI" id="CHEBI:58274"/>
        <dbReference type="ChEBI" id="CHEBI:456216"/>
        <dbReference type="EC" id="2.7.2.11"/>
    </reaction>
</comment>
<comment type="pathway">
    <text evidence="1">Amino-acid biosynthesis; L-proline biosynthesis; L-glutamate 5-semialdehyde from L-glutamate: step 1/2.</text>
</comment>
<comment type="subcellular location">
    <subcellularLocation>
        <location evidence="1">Cytoplasm</location>
    </subcellularLocation>
</comment>
<comment type="similarity">
    <text evidence="1">Belongs to the glutamate 5-kinase family.</text>
</comment>
<proteinExistence type="inferred from homology"/>
<sequence length="372" mass="39212">MRSIIADSKRLVVKVGSSLVTNDGKGLDHAAIGRWAAQIAALRAQGKEVVLVSSGAIAEGMQRLGWSKRPREIDELQAAAAVGQMGLAQVYESRFTEHGIRTAQILLTHADLADRERYLNARSTLLTLLRLGVVPIINENDTVVTDEIKFGDNDTLGALVANLIEGDALIILTDQSGLFTADPRKDPNATLVGEANAGAPELEAMAGGAGSSLGRGGMLTKILAAKRAAHSGANTVIASGREADVLVRLAAGEAIGTQLIARTARMAARKQWMADHLQVRGHVVIDAGAVEKLTAGGKSLLPIGVIDVQGAFARGEVIACVGPDGREVARGLTNYSSAETKLIHRKPSGEIETVLGYMLEPELIHRDNLVLV</sequence>
<name>PROB_BURO1</name>
<gene>
    <name evidence="1" type="primary">proB</name>
    <name type="ordered locus">Bcen_0102</name>
</gene>
<organism>
    <name type="scientific">Burkholderia orbicola (strain AU 1054)</name>
    <dbReference type="NCBI Taxonomy" id="331271"/>
    <lineage>
        <taxon>Bacteria</taxon>
        <taxon>Pseudomonadati</taxon>
        <taxon>Pseudomonadota</taxon>
        <taxon>Betaproteobacteria</taxon>
        <taxon>Burkholderiales</taxon>
        <taxon>Burkholderiaceae</taxon>
        <taxon>Burkholderia</taxon>
        <taxon>Burkholderia cepacia complex</taxon>
        <taxon>Burkholderia orbicola</taxon>
    </lineage>
</organism>
<dbReference type="EC" id="2.7.2.11" evidence="1"/>
<dbReference type="EMBL" id="CP000378">
    <property type="protein sequence ID" value="ABF75016.1"/>
    <property type="molecule type" value="Genomic_DNA"/>
</dbReference>
<dbReference type="SMR" id="Q1BZD9"/>
<dbReference type="HOGENOM" id="CLU_025400_2_0_4"/>
<dbReference type="UniPathway" id="UPA00098">
    <property type="reaction ID" value="UER00359"/>
</dbReference>
<dbReference type="GO" id="GO:0005829">
    <property type="term" value="C:cytosol"/>
    <property type="evidence" value="ECO:0007669"/>
    <property type="project" value="TreeGrafter"/>
</dbReference>
<dbReference type="GO" id="GO:0005524">
    <property type="term" value="F:ATP binding"/>
    <property type="evidence" value="ECO:0007669"/>
    <property type="project" value="UniProtKB-KW"/>
</dbReference>
<dbReference type="GO" id="GO:0004349">
    <property type="term" value="F:glutamate 5-kinase activity"/>
    <property type="evidence" value="ECO:0007669"/>
    <property type="project" value="UniProtKB-UniRule"/>
</dbReference>
<dbReference type="GO" id="GO:0003723">
    <property type="term" value="F:RNA binding"/>
    <property type="evidence" value="ECO:0007669"/>
    <property type="project" value="InterPro"/>
</dbReference>
<dbReference type="GO" id="GO:0055129">
    <property type="term" value="P:L-proline biosynthetic process"/>
    <property type="evidence" value="ECO:0007669"/>
    <property type="project" value="UniProtKB-UniRule"/>
</dbReference>
<dbReference type="CDD" id="cd04242">
    <property type="entry name" value="AAK_G5K_ProB"/>
    <property type="match status" value="1"/>
</dbReference>
<dbReference type="CDD" id="cd21157">
    <property type="entry name" value="PUA_G5K"/>
    <property type="match status" value="1"/>
</dbReference>
<dbReference type="FunFam" id="2.30.130.10:FF:000007">
    <property type="entry name" value="Glutamate 5-kinase"/>
    <property type="match status" value="1"/>
</dbReference>
<dbReference type="FunFam" id="3.40.1160.10:FF:000018">
    <property type="entry name" value="Glutamate 5-kinase"/>
    <property type="match status" value="1"/>
</dbReference>
<dbReference type="Gene3D" id="3.40.1160.10">
    <property type="entry name" value="Acetylglutamate kinase-like"/>
    <property type="match status" value="1"/>
</dbReference>
<dbReference type="Gene3D" id="2.30.130.10">
    <property type="entry name" value="PUA domain"/>
    <property type="match status" value="1"/>
</dbReference>
<dbReference type="HAMAP" id="MF_00456">
    <property type="entry name" value="ProB"/>
    <property type="match status" value="1"/>
</dbReference>
<dbReference type="InterPro" id="IPR036393">
    <property type="entry name" value="AceGlu_kinase-like_sf"/>
</dbReference>
<dbReference type="InterPro" id="IPR001048">
    <property type="entry name" value="Asp/Glu/Uridylate_kinase"/>
</dbReference>
<dbReference type="InterPro" id="IPR041739">
    <property type="entry name" value="G5K_ProB"/>
</dbReference>
<dbReference type="InterPro" id="IPR001057">
    <property type="entry name" value="Glu/AcGlu_kinase"/>
</dbReference>
<dbReference type="InterPro" id="IPR011529">
    <property type="entry name" value="Glu_5kinase"/>
</dbReference>
<dbReference type="InterPro" id="IPR005715">
    <property type="entry name" value="Glu_5kinase/COase_Synthase"/>
</dbReference>
<dbReference type="InterPro" id="IPR019797">
    <property type="entry name" value="Glutamate_5-kinase_CS"/>
</dbReference>
<dbReference type="InterPro" id="IPR002478">
    <property type="entry name" value="PUA"/>
</dbReference>
<dbReference type="InterPro" id="IPR015947">
    <property type="entry name" value="PUA-like_sf"/>
</dbReference>
<dbReference type="InterPro" id="IPR036974">
    <property type="entry name" value="PUA_sf"/>
</dbReference>
<dbReference type="NCBIfam" id="TIGR01027">
    <property type="entry name" value="proB"/>
    <property type="match status" value="1"/>
</dbReference>
<dbReference type="PANTHER" id="PTHR43654">
    <property type="entry name" value="GLUTAMATE 5-KINASE"/>
    <property type="match status" value="1"/>
</dbReference>
<dbReference type="PANTHER" id="PTHR43654:SF1">
    <property type="entry name" value="ISOPENTENYL PHOSPHATE KINASE"/>
    <property type="match status" value="1"/>
</dbReference>
<dbReference type="Pfam" id="PF00696">
    <property type="entry name" value="AA_kinase"/>
    <property type="match status" value="1"/>
</dbReference>
<dbReference type="Pfam" id="PF01472">
    <property type="entry name" value="PUA"/>
    <property type="match status" value="1"/>
</dbReference>
<dbReference type="PIRSF" id="PIRSF000729">
    <property type="entry name" value="GK"/>
    <property type="match status" value="1"/>
</dbReference>
<dbReference type="PRINTS" id="PR00474">
    <property type="entry name" value="GLU5KINASE"/>
</dbReference>
<dbReference type="SMART" id="SM00359">
    <property type="entry name" value="PUA"/>
    <property type="match status" value="1"/>
</dbReference>
<dbReference type="SUPFAM" id="SSF53633">
    <property type="entry name" value="Carbamate kinase-like"/>
    <property type="match status" value="1"/>
</dbReference>
<dbReference type="SUPFAM" id="SSF88697">
    <property type="entry name" value="PUA domain-like"/>
    <property type="match status" value="1"/>
</dbReference>
<dbReference type="PROSITE" id="PS00902">
    <property type="entry name" value="GLUTAMATE_5_KINASE"/>
    <property type="match status" value="1"/>
</dbReference>
<dbReference type="PROSITE" id="PS50890">
    <property type="entry name" value="PUA"/>
    <property type="match status" value="1"/>
</dbReference>
<evidence type="ECO:0000255" key="1">
    <source>
        <dbReference type="HAMAP-Rule" id="MF_00456"/>
    </source>
</evidence>
<reference key="1">
    <citation type="submission" date="2006-05" db="EMBL/GenBank/DDBJ databases">
        <title>Complete sequence of chromosome 1 of Burkholderia cenocepacia AU 1054.</title>
        <authorList>
            <consortium name="US DOE Joint Genome Institute"/>
            <person name="Copeland A."/>
            <person name="Lucas S."/>
            <person name="Lapidus A."/>
            <person name="Barry K."/>
            <person name="Detter J.C."/>
            <person name="Glavina del Rio T."/>
            <person name="Hammon N."/>
            <person name="Israni S."/>
            <person name="Dalin E."/>
            <person name="Tice H."/>
            <person name="Pitluck S."/>
            <person name="Chain P."/>
            <person name="Malfatti S."/>
            <person name="Shin M."/>
            <person name="Vergez L."/>
            <person name="Schmutz J."/>
            <person name="Larimer F."/>
            <person name="Land M."/>
            <person name="Hauser L."/>
            <person name="Kyrpides N."/>
            <person name="Lykidis A."/>
            <person name="LiPuma J.J."/>
            <person name="Konstantinidis K."/>
            <person name="Tiedje J.M."/>
            <person name="Richardson P."/>
        </authorList>
    </citation>
    <scope>NUCLEOTIDE SEQUENCE [LARGE SCALE GENOMIC DNA]</scope>
    <source>
        <strain>AU 1054</strain>
    </source>
</reference>
<keyword id="KW-0028">Amino-acid biosynthesis</keyword>
<keyword id="KW-0067">ATP-binding</keyword>
<keyword id="KW-0963">Cytoplasm</keyword>
<keyword id="KW-0418">Kinase</keyword>
<keyword id="KW-0547">Nucleotide-binding</keyword>
<keyword id="KW-0641">Proline biosynthesis</keyword>
<keyword id="KW-0808">Transferase</keyword>
<accession>Q1BZD9</accession>
<feature type="chain" id="PRO_0000252972" description="Glutamate 5-kinase">
    <location>
        <begin position="1"/>
        <end position="372"/>
    </location>
</feature>
<feature type="domain" description="PUA" evidence="1">
    <location>
        <begin position="280"/>
        <end position="358"/>
    </location>
</feature>
<feature type="binding site" evidence="1">
    <location>
        <position position="14"/>
    </location>
    <ligand>
        <name>ATP</name>
        <dbReference type="ChEBI" id="CHEBI:30616"/>
    </ligand>
</feature>
<feature type="binding site" evidence="1">
    <location>
        <position position="54"/>
    </location>
    <ligand>
        <name>substrate</name>
    </ligand>
</feature>
<feature type="binding site" evidence="1">
    <location>
        <position position="141"/>
    </location>
    <ligand>
        <name>substrate</name>
    </ligand>
</feature>
<feature type="binding site" evidence="1">
    <location>
        <position position="153"/>
    </location>
    <ligand>
        <name>substrate</name>
    </ligand>
</feature>
<feature type="binding site" evidence="1">
    <location>
        <begin position="173"/>
        <end position="174"/>
    </location>
    <ligand>
        <name>ATP</name>
        <dbReference type="ChEBI" id="CHEBI:30616"/>
    </ligand>
</feature>
<protein>
    <recommendedName>
        <fullName evidence="1">Glutamate 5-kinase</fullName>
        <ecNumber evidence="1">2.7.2.11</ecNumber>
    </recommendedName>
    <alternativeName>
        <fullName evidence="1">Gamma-glutamyl kinase</fullName>
        <shortName evidence="1">GK</shortName>
    </alternativeName>
</protein>